<feature type="chain" id="PRO_0000056720" description="T-cell activation Rho GTPase-activating protein">
    <location>
        <begin position="1"/>
        <end position="714"/>
    </location>
</feature>
<feature type="domain" description="Rho-GAP" evidence="2">
    <location>
        <begin position="88"/>
        <end position="277"/>
    </location>
</feature>
<feature type="region of interest" description="Disordered" evidence="3">
    <location>
        <begin position="290"/>
        <end position="357"/>
    </location>
</feature>
<feature type="region of interest" description="Disordered" evidence="3">
    <location>
        <begin position="370"/>
        <end position="419"/>
    </location>
</feature>
<feature type="region of interest" description="Disordered" evidence="3">
    <location>
        <begin position="451"/>
        <end position="508"/>
    </location>
</feature>
<feature type="region of interest" description="Disordered" evidence="3">
    <location>
        <begin position="520"/>
        <end position="563"/>
    </location>
</feature>
<feature type="region of interest" description="Disordered" evidence="3">
    <location>
        <begin position="623"/>
        <end position="650"/>
    </location>
</feature>
<feature type="compositionally biased region" description="Polar residues" evidence="3">
    <location>
        <begin position="299"/>
        <end position="311"/>
    </location>
</feature>
<feature type="compositionally biased region" description="Low complexity" evidence="3">
    <location>
        <begin position="459"/>
        <end position="471"/>
    </location>
</feature>
<feature type="compositionally biased region" description="Basic and acidic residues" evidence="3">
    <location>
        <begin position="492"/>
        <end position="501"/>
    </location>
</feature>
<feature type="compositionally biased region" description="Basic and acidic residues" evidence="3">
    <location>
        <begin position="527"/>
        <end position="545"/>
    </location>
</feature>
<feature type="site" description="Arginine finger; crucial for GTP hydrolysis by stabilizing the transition state" evidence="2">
    <location>
        <position position="123"/>
    </location>
</feature>
<feature type="modified residue" description="Phosphoserine" evidence="1">
    <location>
        <position position="398"/>
    </location>
</feature>
<feature type="sequence conflict" description="In Ref. 1; AAI50729." evidence="5" ref="1">
    <original>Q</original>
    <variation>H</variation>
    <location>
        <position position="345"/>
    </location>
</feature>
<feature type="sequence conflict" description="In Ref. 1; AAI50729." evidence="5" ref="1">
    <original>V</original>
    <variation>M</variation>
    <location>
        <position position="387"/>
    </location>
</feature>
<feature type="sequence conflict" description="In Ref. 1; AAI50729." evidence="5" ref="1">
    <original>A</original>
    <variation>T</variation>
    <location>
        <position position="396"/>
    </location>
</feature>
<feature type="sequence conflict" description="In Ref. 1; AAI50729." evidence="5" ref="1">
    <original>A</original>
    <variation>V</variation>
    <location>
        <position position="703"/>
    </location>
</feature>
<organism>
    <name type="scientific">Mus musculus</name>
    <name type="common">Mouse</name>
    <dbReference type="NCBI Taxonomy" id="10090"/>
    <lineage>
        <taxon>Eukaryota</taxon>
        <taxon>Metazoa</taxon>
        <taxon>Chordata</taxon>
        <taxon>Craniata</taxon>
        <taxon>Vertebrata</taxon>
        <taxon>Euteleostomi</taxon>
        <taxon>Mammalia</taxon>
        <taxon>Eutheria</taxon>
        <taxon>Euarchontoglires</taxon>
        <taxon>Glires</taxon>
        <taxon>Rodentia</taxon>
        <taxon>Myomorpha</taxon>
        <taxon>Muroidea</taxon>
        <taxon>Muridae</taxon>
        <taxon>Murinae</taxon>
        <taxon>Mus</taxon>
        <taxon>Mus</taxon>
    </lineage>
</organism>
<proteinExistence type="evidence at transcript level"/>
<dbReference type="EMBL" id="BC150728">
    <property type="protein sequence ID" value="AAI50729.1"/>
    <property type="molecule type" value="mRNA"/>
</dbReference>
<dbReference type="EMBL" id="BC030886">
    <property type="protein sequence ID" value="AAH30886.1"/>
    <property type="molecule type" value="mRNA"/>
</dbReference>
<dbReference type="EMBL" id="BC039780">
    <property type="protein sequence ID" value="AAH39780.1"/>
    <property type="molecule type" value="mRNA"/>
</dbReference>
<dbReference type="CCDS" id="CCDS28379.1"/>
<dbReference type="RefSeq" id="NP_666080.1">
    <property type="nucleotide sequence ID" value="NM_145968.2"/>
</dbReference>
<dbReference type="SMR" id="B2RWW0"/>
<dbReference type="BioGRID" id="215423">
    <property type="interactions" value="22"/>
</dbReference>
<dbReference type="FunCoup" id="B2RWW0">
    <property type="interactions" value="229"/>
</dbReference>
<dbReference type="IntAct" id="B2RWW0">
    <property type="interactions" value="18"/>
</dbReference>
<dbReference type="STRING" id="10090.ENSMUSP00000047431"/>
<dbReference type="GlyGen" id="B2RWW0">
    <property type="glycosylation" value="5 sites, 1 O-linked glycan (1 site)"/>
</dbReference>
<dbReference type="iPTMnet" id="B2RWW0"/>
<dbReference type="PhosphoSitePlus" id="B2RWW0"/>
<dbReference type="jPOST" id="B2RWW0"/>
<dbReference type="PaxDb" id="10090-ENSMUSP00000047431"/>
<dbReference type="ProteomicsDB" id="262926"/>
<dbReference type="DNASU" id="72536"/>
<dbReference type="Ensembl" id="ENSMUST00000036370.8">
    <property type="protein sequence ID" value="ENSMUSP00000047431.8"/>
    <property type="gene ID" value="ENSMUSG00000033450.9"/>
</dbReference>
<dbReference type="GeneID" id="72536"/>
<dbReference type="KEGG" id="mmu:72536"/>
<dbReference type="UCSC" id="uc008air.2">
    <property type="organism name" value="mouse"/>
</dbReference>
<dbReference type="AGR" id="MGI:3615484"/>
<dbReference type="CTD" id="117289"/>
<dbReference type="MGI" id="MGI:3615484">
    <property type="gene designation" value="Tagap"/>
</dbReference>
<dbReference type="VEuPathDB" id="HostDB:ENSMUSG00000033450"/>
<dbReference type="eggNOG" id="KOG4724">
    <property type="taxonomic scope" value="Eukaryota"/>
</dbReference>
<dbReference type="GeneTree" id="ENSGT00940000157993"/>
<dbReference type="HOGENOM" id="CLU_014209_1_0_1"/>
<dbReference type="InParanoid" id="B2RWW0"/>
<dbReference type="OMA" id="PRTESWK"/>
<dbReference type="OrthoDB" id="60237at9989"/>
<dbReference type="PhylomeDB" id="B2RWW0"/>
<dbReference type="TreeFam" id="TF331062"/>
<dbReference type="Reactome" id="R-MMU-8980692">
    <property type="pathway name" value="RHOA GTPase cycle"/>
</dbReference>
<dbReference type="Reactome" id="R-MMU-9013148">
    <property type="pathway name" value="CDC42 GTPase cycle"/>
</dbReference>
<dbReference type="Reactome" id="R-MMU-9013149">
    <property type="pathway name" value="RAC1 GTPase cycle"/>
</dbReference>
<dbReference type="BioGRID-ORCS" id="72536">
    <property type="hits" value="3 hits in 77 CRISPR screens"/>
</dbReference>
<dbReference type="PRO" id="PR:B2RWW0"/>
<dbReference type="Proteomes" id="UP000000589">
    <property type="component" value="Chromosome 17"/>
</dbReference>
<dbReference type="RNAct" id="B2RWW0">
    <property type="molecule type" value="protein"/>
</dbReference>
<dbReference type="Bgee" id="ENSMUSG00000033450">
    <property type="expression patterns" value="Expressed in granulocyte and 53 other cell types or tissues"/>
</dbReference>
<dbReference type="GO" id="GO:0005096">
    <property type="term" value="F:GTPase activator activity"/>
    <property type="evidence" value="ECO:0007669"/>
    <property type="project" value="InterPro"/>
</dbReference>
<dbReference type="GO" id="GO:0005085">
    <property type="term" value="F:guanyl-nucleotide exchange factor activity"/>
    <property type="evidence" value="ECO:0007669"/>
    <property type="project" value="UniProtKB-KW"/>
</dbReference>
<dbReference type="GO" id="GO:0051607">
    <property type="term" value="P:defense response to virus"/>
    <property type="evidence" value="ECO:0000315"/>
    <property type="project" value="MGI"/>
</dbReference>
<dbReference type="GO" id="GO:0035023">
    <property type="term" value="P:regulation of Rho protein signal transduction"/>
    <property type="evidence" value="ECO:0007669"/>
    <property type="project" value="InterPro"/>
</dbReference>
<dbReference type="GO" id="GO:0007165">
    <property type="term" value="P:signal transduction"/>
    <property type="evidence" value="ECO:0007669"/>
    <property type="project" value="InterPro"/>
</dbReference>
<dbReference type="CDD" id="cd04402">
    <property type="entry name" value="RhoGAP_ARHGAP20"/>
    <property type="match status" value="1"/>
</dbReference>
<dbReference type="FunFam" id="1.10.555.10:FF:000036">
    <property type="entry name" value="T-cell activation Rho GTPase-activating protein"/>
    <property type="match status" value="1"/>
</dbReference>
<dbReference type="Gene3D" id="1.10.555.10">
    <property type="entry name" value="Rho GTPase activation protein"/>
    <property type="match status" value="1"/>
</dbReference>
<dbReference type="InterPro" id="IPR047886">
    <property type="entry name" value="ARHGAP20-like_RhoGAP"/>
</dbReference>
<dbReference type="InterPro" id="IPR008936">
    <property type="entry name" value="Rho_GTPase_activation_prot"/>
</dbReference>
<dbReference type="InterPro" id="IPR000198">
    <property type="entry name" value="RhoGAP_dom"/>
</dbReference>
<dbReference type="PANTHER" id="PTHR23179">
    <property type="entry name" value="T-CELL ACTIVATION RHO GTPASE ACTIVATING PROTEIN-RELATED"/>
    <property type="match status" value="1"/>
</dbReference>
<dbReference type="PANTHER" id="PTHR23179:SF26">
    <property type="entry name" value="T-CELL ACTIVATION RHO GTPASE-ACTIVATING PROTEIN"/>
    <property type="match status" value="1"/>
</dbReference>
<dbReference type="Pfam" id="PF00620">
    <property type="entry name" value="RhoGAP"/>
    <property type="match status" value="1"/>
</dbReference>
<dbReference type="SMART" id="SM00324">
    <property type="entry name" value="RhoGAP"/>
    <property type="match status" value="1"/>
</dbReference>
<dbReference type="SUPFAM" id="SSF48350">
    <property type="entry name" value="GTPase activation domain, GAP"/>
    <property type="match status" value="1"/>
</dbReference>
<dbReference type="PROSITE" id="PS50238">
    <property type="entry name" value="RHOGAP"/>
    <property type="match status" value="1"/>
</dbReference>
<reference key="1">
    <citation type="journal article" date="2005" name="Nat. Genet.">
        <title>The t complex-encoded GTPase-activating protein Tagap1 acts as a transmission ratio distorter in mice.</title>
        <authorList>
            <person name="Bauer H."/>
            <person name="Willert J."/>
            <person name="Koschorz B."/>
            <person name="Herrmann B.G."/>
        </authorList>
    </citation>
    <scope>NUCLEOTIDE SEQUENCE [MRNA]</scope>
    <scope>TISSUE SPECIFICITY</scope>
    <scope>FUNCTION</scope>
    <scope>DEVELOPMENTAL STAGE</scope>
</reference>
<reference key="2">
    <citation type="journal article" date="2004" name="Genome Res.">
        <title>The status, quality, and expansion of the NIH full-length cDNA project: the Mammalian Gene Collection (MGC).</title>
        <authorList>
            <consortium name="The MGC Project Team"/>
        </authorList>
    </citation>
    <scope>NUCLEOTIDE SEQUENCE [LARGE SCALE MRNA]</scope>
    <source>
        <strain>FVB/N</strain>
        <tissue>Brain</tissue>
        <tissue>Mammary tumor</tissue>
    </source>
</reference>
<sequence length="714" mass="78920">MKLISSLDGSKTLNANNMETLIECQSEGDIKVPPLLTSCESEDSICQLTEIKKRKKVLSWPSLMRKLSPSSDFSGSLEPELKVSLFDQPLSIICGENDTLPRPIQDILTILCLKGPSTEGIFRKAASEKARKELKEGLNCGVSVNLKQLPVHLLAVVFKDFLRGIPLKLLSCDLFEDWMGALEKPTEEDRIEALKQVAGGLPRPNLLLLRHLLYVLHLISKNAEVNKMDSSNLAICIGPNMLTLKNDQSLSFQAQKDLNNKVKILVEFLIDNCFEIFGENIRTRSRITSDDSLEHTDSSDVSTLQNDSAYDSNDPDVEPTSGAASPNRQLEGPTPTMAGLDTRGQRDTCESSSESSVSMVVRLKSSIVQQDRRFSEPNMSPSRECLVGPTSKQKLARSEDSFTLSQDASCSEGDEAEDPFTEEVFPAVDSKPKRPVDLKIKNWTQGLASPQGHITKAFSRSSPGESLGSSPVPSPSCPKRNFFTRHQSFTTKTDKTKPQREIRKHSMSFSFASHKKVLPRTSSIGSEKSKDFSRDQLQKDLRKESQLSGRIVQENESEIQSQTSLGFSLSGTWALSVDNTFQLVDMRKPGSPPSYEEAIYYQTSGLTAYGGQTVGSMRSRMFKPSTAVPPVPSHHGGDLSEGTPGGHRLSSVTEHWTHSQTVHVSIETQGRSELHQLRTVSESMQKAKLDCLGPQHSHLVFEADQLCCARESYI</sequence>
<comment type="function">
    <text evidence="4">May function as a GTPase-activating protein. May play a role in transmission ratio distortion (TRD) in mouse, in which heterozygous males for t-locus transmit their t-carrying chromosome to 95% or more of their offspring.</text>
</comment>
<comment type="tissue specificity">
    <text evidence="4">Highly expressed in testis.</text>
</comment>
<comment type="developmental stage">
    <text evidence="4">Expressed in testis at 7 dpc.</text>
</comment>
<comment type="caution">
    <text evidence="5">Previously thought to be the same gene as Tagap1. These are distinct loci that encode proteins with identical C-termini but each with a unique N-terminus.</text>
</comment>
<accession>B2RWW0</accession>
<accession>Q8K2L9</accession>
<accession>Q920D6</accession>
<evidence type="ECO:0000250" key="1">
    <source>
        <dbReference type="UniProtKB" id="Q8N103"/>
    </source>
</evidence>
<evidence type="ECO:0000255" key="2">
    <source>
        <dbReference type="PROSITE-ProRule" id="PRU00172"/>
    </source>
</evidence>
<evidence type="ECO:0000256" key="3">
    <source>
        <dbReference type="SAM" id="MobiDB-lite"/>
    </source>
</evidence>
<evidence type="ECO:0000269" key="4">
    <source>
    </source>
</evidence>
<evidence type="ECO:0000305" key="5"/>
<keyword id="KW-0343">GTPase activation</keyword>
<keyword id="KW-0344">Guanine-nucleotide releasing factor</keyword>
<keyword id="KW-0597">Phosphoprotein</keyword>
<keyword id="KW-1185">Reference proteome</keyword>
<protein>
    <recommendedName>
        <fullName>T-cell activation Rho GTPase-activating protein</fullName>
    </recommendedName>
    <alternativeName>
        <fullName>T-cell activation GTPase-activating protein</fullName>
    </alternativeName>
</protein>
<name>TAGAP_MOUSE</name>
<gene>
    <name type="primary">Tagap</name>
</gene>